<evidence type="ECO:0000250" key="1"/>
<evidence type="ECO:0000250" key="2">
    <source>
        <dbReference type="UniProtKB" id="P06539"/>
    </source>
</evidence>
<evidence type="ECO:0000269" key="3">
    <source>
    </source>
</evidence>
<evidence type="ECO:0000269" key="4">
    <source>
    </source>
</evidence>
<evidence type="ECO:0000305" key="5"/>
<evidence type="ECO:0000305" key="6">
    <source>
    </source>
</evidence>
<comment type="function">
    <text>Light-harvesting photosynthetic bile pigment-protein from the phycobiliprotein complex (phycobilisome, PBS). Phycocyanin is the major phycobiliprotein in the PBS rod.</text>
</comment>
<comment type="subunit">
    <text evidence="2">Heterodimer of an alpha and a beta subunit, which further assembles into trimers and the trimers into hexamers.</text>
</comment>
<comment type="subcellular location">
    <subcellularLocation>
        <location evidence="1">Cellular thylakoid membrane</location>
        <topology evidence="1">Peripheral membrane protein</topology>
        <orientation evidence="1">Cytoplasmic side</orientation>
    </subcellularLocation>
    <text evidence="1">Part of the phycobilisome rod.</text>
</comment>
<comment type="PTM">
    <text evidence="3">Contains two covalently linked bilin chromophores. The chromophore on position 82 is added by the phycocyanobilin lyase CpcUS, while the chromophore on position 153 is added by the phycocyanobilin lyase CpcT.</text>
</comment>
<comment type="mass spectrometry" mass="19522.0" method="Electrospray" evidence="3">
    <text>The measured mass is that of the methylated protein plus two covalently linked phycocyanobilin chromophores.</text>
</comment>
<comment type="similarity">
    <text evidence="5">Belongs to the phycobiliprotein family.</text>
</comment>
<dbReference type="EMBL" id="K02660">
    <property type="protein sequence ID" value="AAB05343.1"/>
    <property type="molecule type" value="Genomic_DNA"/>
</dbReference>
<dbReference type="EMBL" id="K02659">
    <property type="protein sequence ID" value="AAB05341.1"/>
    <property type="molecule type" value="Genomic_DNA"/>
</dbReference>
<dbReference type="EMBL" id="CP000951">
    <property type="protein sequence ID" value="ACB00190.1"/>
    <property type="molecule type" value="Genomic_DNA"/>
</dbReference>
<dbReference type="RefSeq" id="WP_012307808.1">
    <property type="nucleotide sequence ID" value="NZ_JAHHPU010000006.1"/>
</dbReference>
<dbReference type="PDB" id="7EXT">
    <property type="method" value="EM"/>
    <property type="resolution" value="3.50 A"/>
    <property type="chains" value="C1/C2/C4/C5/C6/C8/E1/E2/E4/E5/E6/E8/G1/G2/G4/G5/G6/G8/I1/I2/I4/I5/I6/I8/K1/K2/K4/K5/K6/K8=1-172"/>
</dbReference>
<dbReference type="PDBsum" id="7EXT"/>
<dbReference type="EMDB" id="EMD-31373"/>
<dbReference type="SMR" id="P03944"/>
<dbReference type="STRING" id="32049.SYNPCC7002_A2209"/>
<dbReference type="iPTMnet" id="P03944"/>
<dbReference type="KEGG" id="syp:SYNPCC7002_A2209"/>
<dbReference type="eggNOG" id="ENOG502Z7NE">
    <property type="taxonomic scope" value="Bacteria"/>
</dbReference>
<dbReference type="HOGENOM" id="CLU_104219_0_0_3"/>
<dbReference type="Proteomes" id="UP000001688">
    <property type="component" value="Chromosome"/>
</dbReference>
<dbReference type="GO" id="GO:0030089">
    <property type="term" value="C:phycobilisome"/>
    <property type="evidence" value="ECO:0007669"/>
    <property type="project" value="UniProtKB-KW"/>
</dbReference>
<dbReference type="GO" id="GO:0031676">
    <property type="term" value="C:plasma membrane-derived thylakoid membrane"/>
    <property type="evidence" value="ECO:0007669"/>
    <property type="project" value="UniProtKB-SubCell"/>
</dbReference>
<dbReference type="GO" id="GO:0015979">
    <property type="term" value="P:photosynthesis"/>
    <property type="evidence" value="ECO:0007669"/>
    <property type="project" value="UniProtKB-KW"/>
</dbReference>
<dbReference type="Gene3D" id="1.10.490.20">
    <property type="entry name" value="Phycocyanins"/>
    <property type="match status" value="1"/>
</dbReference>
<dbReference type="InterPro" id="IPR009050">
    <property type="entry name" value="Globin-like_sf"/>
</dbReference>
<dbReference type="InterPro" id="IPR012128">
    <property type="entry name" value="Phycobilisome_asu/bsu"/>
</dbReference>
<dbReference type="InterPro" id="IPR038719">
    <property type="entry name" value="Phycobilisome_asu/bsu_sf"/>
</dbReference>
<dbReference type="InterPro" id="IPR006247">
    <property type="entry name" value="Phycocyanin_b"/>
</dbReference>
<dbReference type="NCBIfam" id="TIGR01339">
    <property type="entry name" value="phycocy_beta"/>
    <property type="match status" value="1"/>
</dbReference>
<dbReference type="PANTHER" id="PTHR34011:SF7">
    <property type="entry name" value="C-PHYCOCYANIN BETA SUBUNIT"/>
    <property type="match status" value="1"/>
</dbReference>
<dbReference type="PANTHER" id="PTHR34011">
    <property type="entry name" value="PHYCOBILISOME 32.1 KDA LINKER POLYPEPTIDE, PHYCOCYANIN-ASSOCIATED, ROD 2-RELATED"/>
    <property type="match status" value="1"/>
</dbReference>
<dbReference type="Pfam" id="PF00502">
    <property type="entry name" value="Phycobilisome"/>
    <property type="match status" value="1"/>
</dbReference>
<dbReference type="PIRSF" id="PIRSF000081">
    <property type="entry name" value="Phycocyanin"/>
    <property type="match status" value="1"/>
</dbReference>
<dbReference type="SUPFAM" id="SSF46458">
    <property type="entry name" value="Globin-like"/>
    <property type="match status" value="1"/>
</dbReference>
<organism>
    <name type="scientific">Picosynechococcus sp. (strain ATCC 27264 / PCC 7002 / PR-6)</name>
    <name type="common">Agmenellum quadruplicatum</name>
    <dbReference type="NCBI Taxonomy" id="32049"/>
    <lineage>
        <taxon>Bacteria</taxon>
        <taxon>Bacillati</taxon>
        <taxon>Cyanobacteriota</taxon>
        <taxon>Cyanophyceae</taxon>
        <taxon>Oscillatoriophycideae</taxon>
        <taxon>Chroococcales</taxon>
        <taxon>Geminocystaceae</taxon>
        <taxon>Picosynechococcus</taxon>
    </lineage>
</organism>
<reference key="1">
    <citation type="journal article" date="1984" name="Proc. Natl. Acad. Sci. U.S.A.">
        <title>Genes for the alpha and beta subunits of phycocyanin.</title>
        <authorList>
            <person name="de Lorimier R."/>
            <person name="Bryant D.A."/>
            <person name="Porter R.D."/>
            <person name="Liu W.-Y."/>
            <person name="Jay E."/>
            <person name="Stevens S.E. Jr."/>
        </authorList>
    </citation>
    <scope>NUCLEOTIDE SEQUENCE [GENOMIC DNA]</scope>
    <source>
        <strain>ATCC 27264 / PCC 7002 / PR-6</strain>
    </source>
</reference>
<reference key="2">
    <citation type="journal article" date="1984" name="Proc. Natl. Acad. Sci. U.S.A.">
        <title>Cloning and sequencing of the genes encoding the alpha and beta subunits of C-phycocyanin from the cyanobacterium Agmenellum quadruplicatum.</title>
        <authorList>
            <person name="Pilot T.J."/>
            <person name="Fox J.L."/>
        </authorList>
    </citation>
    <scope>NUCLEOTIDE SEQUENCE [GENOMIC DNA]</scope>
    <source>
        <strain>ATCC 27264 / PCC 7002 / PR-6</strain>
    </source>
</reference>
<reference key="3">
    <citation type="submission" date="2008-02" db="EMBL/GenBank/DDBJ databases">
        <title>Complete sequence of Synechococcus sp. PCC 7002.</title>
        <authorList>
            <person name="Li T."/>
            <person name="Zhao J."/>
            <person name="Zhao C."/>
            <person name="Liu Z."/>
            <person name="Zhao F."/>
            <person name="Marquardt J."/>
            <person name="Nomura C.T."/>
            <person name="Persson S."/>
            <person name="Detter J.C."/>
            <person name="Richardson P.M."/>
            <person name="Lanz C."/>
            <person name="Schuster S.C."/>
            <person name="Wang J."/>
            <person name="Li S."/>
            <person name="Huang X."/>
            <person name="Cai T."/>
            <person name="Yu Z."/>
            <person name="Luo J."/>
            <person name="Zhao J."/>
            <person name="Bryant D.A."/>
        </authorList>
    </citation>
    <scope>NUCLEOTIDE SEQUENCE [LARGE SCALE GENOMIC DNA]</scope>
    <source>
        <strain>ATCC 27264 / PCC 7002 / PR-6</strain>
    </source>
</reference>
<reference key="4">
    <citation type="journal article" date="1987" name="J. Biol. Chem.">
        <title>Gamma-N-methylasparagine in phycobiliproteins. Occurrence, location, and biosynthesis.</title>
        <authorList>
            <person name="Klotz A.V."/>
            <person name="Glazer A.N."/>
        </authorList>
    </citation>
    <scope>METHYLATION AT ASN-72</scope>
    <source>
        <strain>ATCC 27264 / PCC 7002 / PR-6</strain>
    </source>
</reference>
<reference key="5">
    <citation type="journal article" date="1988" name="FEBS Lett.">
        <title>The structure of gamma-N-methylasparagine in C-phycocyanin from Mastigocladus laminosus and Agmenellum quadruplicatum.</title>
        <authorList>
            <person name="Duerring M."/>
            <person name="Huber R."/>
            <person name="Bode W."/>
        </authorList>
    </citation>
    <scope>TERTIARY STRUCTURE AROUND METHYLATED SITE</scope>
</reference>
<reference key="6">
    <citation type="journal article" date="2008" name="J. Biol. Chem.">
        <title>Biogenesis of phycobiliproteins: I. cpcS-I and cpcU mutants of the cyanobacterium Synechococcus sp. PCC 7002 define a heterodimeric phyococyanobilin lyase specific for beta-phycocyanin and allophycocyanin subunits.</title>
        <authorList>
            <person name="Shen G."/>
            <person name="Schluchter W.M."/>
            <person name="Bryant D.A."/>
        </authorList>
    </citation>
    <scope>MASS SPECTROMETRY</scope>
    <scope>CHROMOPHORE ATTACHMENT</scope>
    <source>
        <strain>ATCC 27264 / PCC 7002 / PR-6</strain>
    </source>
</reference>
<name>PHCB_PICP2</name>
<protein>
    <recommendedName>
        <fullName>C-phycocyanin subunit beta</fullName>
        <shortName>beta-PC</shortName>
    </recommendedName>
</protein>
<gene>
    <name type="primary">cpcB</name>
    <name type="ordered locus">SYNPCC7002_A2209</name>
</gene>
<keyword id="KW-0002">3D-structure</keyword>
<keyword id="KW-0042">Antenna complex</keyword>
<keyword id="KW-0089">Bile pigment</keyword>
<keyword id="KW-0157">Chromophore</keyword>
<keyword id="KW-0249">Electron transport</keyword>
<keyword id="KW-0472">Membrane</keyword>
<keyword id="KW-0488">Methylation</keyword>
<keyword id="KW-0602">Photosynthesis</keyword>
<keyword id="KW-0605">Phycobilisome</keyword>
<keyword id="KW-1185">Reference proteome</keyword>
<keyword id="KW-0793">Thylakoid</keyword>
<keyword id="KW-0813">Transport</keyword>
<accession>P03944</accession>
<accession>B1XIT8</accession>
<proteinExistence type="evidence at protein level"/>
<feature type="chain" id="PRO_0000199157" description="C-phycocyanin subunit beta">
    <location>
        <begin position="1"/>
        <end position="172"/>
    </location>
</feature>
<feature type="binding site" description="covalent" evidence="6">
    <location>
        <position position="82"/>
    </location>
    <ligand>
        <name>(2R,3E)-phycocyanobilin</name>
        <dbReference type="ChEBI" id="CHEBI:85275"/>
        <label>1</label>
    </ligand>
</feature>
<feature type="binding site" description="covalent" evidence="6">
    <location>
        <position position="153"/>
    </location>
    <ligand>
        <name>(2R,3E)-phycocyanobilin</name>
        <dbReference type="ChEBI" id="CHEBI:85275"/>
        <label>2</label>
    </ligand>
</feature>
<feature type="modified residue" description="N4-methylasparagine" evidence="3 4">
    <location>
        <position position="72"/>
    </location>
</feature>
<sequence length="172" mass="18336">MFDIFTRVVSQADARGEFISSDKLEALKKVVAEGTKRSDAVSRMTNNASSIVTNAARQLFADQPQLIAPGGNAYTNRRMAACLRDMEIILRYVTYATFTGDASVLNDRCLNGLRETYVALGVPGASVAAGVRAMGKAAVAIVMDPAGVTSGDCSSLQQEIELYFETAAKAVE</sequence>